<dbReference type="EC" id="7.1.1.-" evidence="1"/>
<dbReference type="EMBL" id="AJ235271">
    <property type="protein sequence ID" value="CAA14814.1"/>
    <property type="molecule type" value="Genomic_DNA"/>
</dbReference>
<dbReference type="PIR" id="D71692">
    <property type="entry name" value="D71692"/>
</dbReference>
<dbReference type="RefSeq" id="NP_220738.1">
    <property type="nucleotide sequence ID" value="NC_000963.1"/>
</dbReference>
<dbReference type="RefSeq" id="WP_010886274.1">
    <property type="nucleotide sequence ID" value="NC_000963.1"/>
</dbReference>
<dbReference type="SMR" id="Q9ZDH4"/>
<dbReference type="STRING" id="272947.gene:17555434"/>
<dbReference type="EnsemblBacteria" id="CAA14814">
    <property type="protein sequence ID" value="CAA14814"/>
    <property type="gene ID" value="CAA14814"/>
</dbReference>
<dbReference type="GeneID" id="57569480"/>
<dbReference type="KEGG" id="rpr:RP354"/>
<dbReference type="PATRIC" id="fig|272947.5.peg.364"/>
<dbReference type="eggNOG" id="COG0649">
    <property type="taxonomic scope" value="Bacteria"/>
</dbReference>
<dbReference type="HOGENOM" id="CLU_015134_1_2_5"/>
<dbReference type="OrthoDB" id="9801496at2"/>
<dbReference type="Proteomes" id="UP000002480">
    <property type="component" value="Chromosome"/>
</dbReference>
<dbReference type="GO" id="GO:0005886">
    <property type="term" value="C:plasma membrane"/>
    <property type="evidence" value="ECO:0007669"/>
    <property type="project" value="UniProtKB-SubCell"/>
</dbReference>
<dbReference type="GO" id="GO:0051287">
    <property type="term" value="F:NAD binding"/>
    <property type="evidence" value="ECO:0007669"/>
    <property type="project" value="InterPro"/>
</dbReference>
<dbReference type="GO" id="GO:0050136">
    <property type="term" value="F:NADH:ubiquinone reductase (non-electrogenic) activity"/>
    <property type="evidence" value="ECO:0007669"/>
    <property type="project" value="UniProtKB-UniRule"/>
</dbReference>
<dbReference type="GO" id="GO:0048038">
    <property type="term" value="F:quinone binding"/>
    <property type="evidence" value="ECO:0007669"/>
    <property type="project" value="UniProtKB-KW"/>
</dbReference>
<dbReference type="FunFam" id="1.10.645.10:FF:000005">
    <property type="entry name" value="NADH-quinone oxidoreductase subunit D"/>
    <property type="match status" value="1"/>
</dbReference>
<dbReference type="Gene3D" id="1.10.645.10">
    <property type="entry name" value="Cytochrome-c3 Hydrogenase, chain B"/>
    <property type="match status" value="1"/>
</dbReference>
<dbReference type="HAMAP" id="MF_01358">
    <property type="entry name" value="NDH1_NuoD"/>
    <property type="match status" value="1"/>
</dbReference>
<dbReference type="InterPro" id="IPR001135">
    <property type="entry name" value="NADH_Q_OxRdtase_suD"/>
</dbReference>
<dbReference type="InterPro" id="IPR014029">
    <property type="entry name" value="NADH_UbQ_OxRdtase_49kDa_CS"/>
</dbReference>
<dbReference type="InterPro" id="IPR022885">
    <property type="entry name" value="NDH1_su_D/H"/>
</dbReference>
<dbReference type="InterPro" id="IPR029014">
    <property type="entry name" value="NiFe-Hase_large"/>
</dbReference>
<dbReference type="NCBIfam" id="TIGR01962">
    <property type="entry name" value="NuoD"/>
    <property type="match status" value="1"/>
</dbReference>
<dbReference type="NCBIfam" id="NF004739">
    <property type="entry name" value="PRK06075.1"/>
    <property type="match status" value="1"/>
</dbReference>
<dbReference type="PANTHER" id="PTHR11993:SF10">
    <property type="entry name" value="NADH DEHYDROGENASE [UBIQUINONE] IRON-SULFUR PROTEIN 2, MITOCHONDRIAL"/>
    <property type="match status" value="1"/>
</dbReference>
<dbReference type="PANTHER" id="PTHR11993">
    <property type="entry name" value="NADH-UBIQUINONE OXIDOREDUCTASE 49 KDA SUBUNIT"/>
    <property type="match status" value="1"/>
</dbReference>
<dbReference type="Pfam" id="PF00346">
    <property type="entry name" value="Complex1_49kDa"/>
    <property type="match status" value="1"/>
</dbReference>
<dbReference type="SUPFAM" id="SSF56762">
    <property type="entry name" value="HydB/Nqo4-like"/>
    <property type="match status" value="1"/>
</dbReference>
<dbReference type="PROSITE" id="PS00535">
    <property type="entry name" value="COMPLEX1_49K"/>
    <property type="match status" value="1"/>
</dbReference>
<evidence type="ECO:0000255" key="1">
    <source>
        <dbReference type="HAMAP-Rule" id="MF_01358"/>
    </source>
</evidence>
<organism>
    <name type="scientific">Rickettsia prowazekii (strain Madrid E)</name>
    <dbReference type="NCBI Taxonomy" id="272947"/>
    <lineage>
        <taxon>Bacteria</taxon>
        <taxon>Pseudomonadati</taxon>
        <taxon>Pseudomonadota</taxon>
        <taxon>Alphaproteobacteria</taxon>
        <taxon>Rickettsiales</taxon>
        <taxon>Rickettsiaceae</taxon>
        <taxon>Rickettsieae</taxon>
        <taxon>Rickettsia</taxon>
        <taxon>typhus group</taxon>
    </lineage>
</organism>
<accession>Q9ZDH4</accession>
<protein>
    <recommendedName>
        <fullName evidence="1">NADH-quinone oxidoreductase subunit D</fullName>
        <ecNumber evidence="1">7.1.1.-</ecNumber>
    </recommendedName>
    <alternativeName>
        <fullName evidence="1">NADH dehydrogenase I subunit D</fullName>
    </alternativeName>
    <alternativeName>
        <fullName evidence="1">NDH-1 subunit D</fullName>
    </alternativeName>
</protein>
<gene>
    <name evidence="1" type="primary">nuoD</name>
    <name type="ordered locus">RP354</name>
</gene>
<comment type="function">
    <text evidence="1">NDH-1 shuttles electrons from NADH, via FMN and iron-sulfur (Fe-S) centers, to quinones in the respiratory chain. The immediate electron acceptor for the enzyme in this species is believed to be ubiquinone. Couples the redox reaction to proton translocation (for every two electrons transferred, four hydrogen ions are translocated across the cytoplasmic membrane), and thus conserves the redox energy in a proton gradient.</text>
</comment>
<comment type="catalytic activity">
    <reaction evidence="1">
        <text>a quinone + NADH + 5 H(+)(in) = a quinol + NAD(+) + 4 H(+)(out)</text>
        <dbReference type="Rhea" id="RHEA:57888"/>
        <dbReference type="ChEBI" id="CHEBI:15378"/>
        <dbReference type="ChEBI" id="CHEBI:24646"/>
        <dbReference type="ChEBI" id="CHEBI:57540"/>
        <dbReference type="ChEBI" id="CHEBI:57945"/>
        <dbReference type="ChEBI" id="CHEBI:132124"/>
    </reaction>
</comment>
<comment type="subunit">
    <text evidence="1">NDH-1 is composed of 14 different subunits. Subunits NuoB, C, D, E, F, and G constitute the peripheral sector of the complex.</text>
</comment>
<comment type="subcellular location">
    <subcellularLocation>
        <location evidence="1">Cell inner membrane</location>
        <topology evidence="1">Peripheral membrane protein</topology>
        <orientation evidence="1">Cytoplasmic side</orientation>
    </subcellularLocation>
</comment>
<comment type="similarity">
    <text evidence="1">Belongs to the complex I 49 kDa subunit family.</text>
</comment>
<feature type="chain" id="PRO_0000118625" description="NADH-quinone oxidoreductase subunit D">
    <location>
        <begin position="1"/>
        <end position="389"/>
    </location>
</feature>
<name>NUOD_RICPR</name>
<reference key="1">
    <citation type="journal article" date="1998" name="Nature">
        <title>The genome sequence of Rickettsia prowazekii and the origin of mitochondria.</title>
        <authorList>
            <person name="Andersson S.G.E."/>
            <person name="Zomorodipour A."/>
            <person name="Andersson J.O."/>
            <person name="Sicheritz-Ponten T."/>
            <person name="Alsmark U.C.M."/>
            <person name="Podowski R.M."/>
            <person name="Naeslund A.K."/>
            <person name="Eriksson A.-S."/>
            <person name="Winkler H.H."/>
            <person name="Kurland C.G."/>
        </authorList>
    </citation>
    <scope>NUCLEOTIDE SEQUENCE [LARGE SCALE GENOMIC DNA]</scope>
    <source>
        <strain>Madrid E</strain>
    </source>
</reference>
<proteinExistence type="inferred from homology"/>
<sequence>MTNKTITLNLGPQHPATHGVLRLILEMDGEVVNNADPHIGLLHRGTEKLIEHKTYLQAIPYFDRLDYVSPMCQEHAFALAVESLLECSVPRRAQFIRVLFSELTRILNHTLNIGSQALDIGATTPLLWLFEEREKIMEFYERVSGSRMHSNYFRPGGVAEDLPENLLEDINKFIEQFPSKLNDIENLLNENRLWKQRLVDIGVVSQKDAMDWGFSGPMLRGSGIAWDLRKSNPYDVYDEMDFEVPIGKNGDCYDRYLVRILEMYESIKIIKQCIVKMPKGQVKTDDPKLTPPTRGKMKESMEAMIHHFKLYTEGYDVPIGETYKAVEAPKGEFGVYLYSQGGNKPYRCRIKAPGFAHLQGLNFMSKGHLIADVITIIATLDIVFGEIDR</sequence>
<keyword id="KW-0997">Cell inner membrane</keyword>
<keyword id="KW-1003">Cell membrane</keyword>
<keyword id="KW-0472">Membrane</keyword>
<keyword id="KW-0520">NAD</keyword>
<keyword id="KW-0874">Quinone</keyword>
<keyword id="KW-1185">Reference proteome</keyword>
<keyword id="KW-1278">Translocase</keyword>
<keyword id="KW-0813">Transport</keyword>
<keyword id="KW-0830">Ubiquinone</keyword>